<feature type="chain" id="PRO_0000160587" description="Cell division protein FtsQ">
    <location>
        <begin position="1"/>
        <end position="264"/>
    </location>
</feature>
<feature type="topological domain" description="Cytoplasmic" evidence="1">
    <location>
        <begin position="1"/>
        <end position="31"/>
    </location>
</feature>
<feature type="transmembrane region" description="Helical" evidence="1">
    <location>
        <begin position="32"/>
        <end position="52"/>
    </location>
</feature>
<feature type="topological domain" description="Extracellular" evidence="1">
    <location>
        <begin position="53"/>
        <end position="264"/>
    </location>
</feature>
<feature type="domain" description="POTRA" evidence="2">
    <location>
        <begin position="57"/>
        <end position="126"/>
    </location>
</feature>
<feature type="region of interest" description="Disordered" evidence="3">
    <location>
        <begin position="1"/>
        <end position="24"/>
    </location>
</feature>
<dbReference type="EMBL" id="AF081213">
    <property type="protein sequence ID" value="AAC31573.1"/>
    <property type="molecule type" value="Genomic_DNA"/>
</dbReference>
<dbReference type="PIR" id="PC7055">
    <property type="entry name" value="PC7055"/>
</dbReference>
<dbReference type="RefSeq" id="WP_043477992.1">
    <property type="nucleotide sequence ID" value="NZ_CP052032.1"/>
</dbReference>
<dbReference type="SMR" id="O86038"/>
<dbReference type="GO" id="GO:0032153">
    <property type="term" value="C:cell division site"/>
    <property type="evidence" value="ECO:0007669"/>
    <property type="project" value="UniProtKB-UniRule"/>
</dbReference>
<dbReference type="GO" id="GO:0005886">
    <property type="term" value="C:plasma membrane"/>
    <property type="evidence" value="ECO:0007669"/>
    <property type="project" value="UniProtKB-SubCell"/>
</dbReference>
<dbReference type="GO" id="GO:0090529">
    <property type="term" value="P:cell septum assembly"/>
    <property type="evidence" value="ECO:0007669"/>
    <property type="project" value="InterPro"/>
</dbReference>
<dbReference type="GO" id="GO:0043093">
    <property type="term" value="P:FtsZ-dependent cytokinesis"/>
    <property type="evidence" value="ECO:0007669"/>
    <property type="project" value="UniProtKB-UniRule"/>
</dbReference>
<dbReference type="Gene3D" id="3.10.20.310">
    <property type="entry name" value="membrane protein fhac"/>
    <property type="match status" value="1"/>
</dbReference>
<dbReference type="HAMAP" id="MF_00911">
    <property type="entry name" value="FtsQ_subfam"/>
    <property type="match status" value="1"/>
</dbReference>
<dbReference type="InterPro" id="IPR026579">
    <property type="entry name" value="FtsQ"/>
</dbReference>
<dbReference type="InterPro" id="IPR050487">
    <property type="entry name" value="FtsQ_DivIB"/>
</dbReference>
<dbReference type="InterPro" id="IPR034746">
    <property type="entry name" value="POTRA"/>
</dbReference>
<dbReference type="InterPro" id="IPR013685">
    <property type="entry name" value="POTRA_FtsQ_type"/>
</dbReference>
<dbReference type="PANTHER" id="PTHR37820">
    <property type="entry name" value="CELL DIVISION PROTEIN DIVIB"/>
    <property type="match status" value="1"/>
</dbReference>
<dbReference type="PANTHER" id="PTHR37820:SF1">
    <property type="entry name" value="CELL DIVISION PROTEIN FTSQ"/>
    <property type="match status" value="1"/>
</dbReference>
<dbReference type="Pfam" id="PF08478">
    <property type="entry name" value="POTRA_1"/>
    <property type="match status" value="1"/>
</dbReference>
<dbReference type="PROSITE" id="PS51779">
    <property type="entry name" value="POTRA"/>
    <property type="match status" value="1"/>
</dbReference>
<proteinExistence type="inferred from homology"/>
<comment type="function">
    <text evidence="1">Essential cell division protein.</text>
</comment>
<comment type="subcellular location">
    <subcellularLocation>
        <location evidence="1">Cell membrane</location>
        <topology evidence="1">Single-pass type II membrane protein</topology>
    </subcellularLocation>
    <text evidence="1">Localizes to the division septum.</text>
</comment>
<comment type="similarity">
    <text evidence="1">Belongs to the FtsQ/DivIB family. FtsQ subfamily.</text>
</comment>
<keyword id="KW-0131">Cell cycle</keyword>
<keyword id="KW-0132">Cell division</keyword>
<keyword id="KW-1003">Cell membrane</keyword>
<keyword id="KW-0472">Membrane</keyword>
<keyword id="KW-0812">Transmembrane</keyword>
<keyword id="KW-1133">Transmembrane helix</keyword>
<sequence>MAGPTTAERGDRQQESSGPPPARWSGTRRLRALVVLAALLVLLAGGCAWLLYGSSWLRLERVSVSGTRMLTPADVREAASVPVGAPLVSVDTEAVEARLRRKLPRIDTVDVVRSWPHGIGLKVTERTPVLLVRKAGTFVEVDDDGVRFATVSQAPKGVPVLELTASRSGSGAASFRRFGTDRLVREAVRVGGDLPAAVARQTRTVKVGSYDDISLELGDGRSVAWGSGEDGRAKARALTALMKAVPGARHFDVSVPTAPASSGS</sequence>
<reference key="1">
    <citation type="journal article" date="2000" name="Biochem. Biophys. Res. Commun.">
        <title>Isolation and characterization of dcw cluster from Streptomyces collinus producing kirromycin.</title>
        <authorList>
            <person name="Mikulik K."/>
            <person name="Zhulanova E."/>
            <person name="Kratky M."/>
            <person name="Kofronova O."/>
            <person name="Benada O."/>
        </authorList>
    </citation>
    <scope>NUCLEOTIDE SEQUENCE [GENOMIC DNA]</scope>
    <source>
        <strain>DSM 40733 / Tue 365</strain>
    </source>
</reference>
<organism>
    <name type="scientific">Streptomyces collinus</name>
    <dbReference type="NCBI Taxonomy" id="42684"/>
    <lineage>
        <taxon>Bacteria</taxon>
        <taxon>Bacillati</taxon>
        <taxon>Actinomycetota</taxon>
        <taxon>Actinomycetes</taxon>
        <taxon>Kitasatosporales</taxon>
        <taxon>Streptomycetaceae</taxon>
        <taxon>Streptomyces</taxon>
    </lineage>
</organism>
<gene>
    <name evidence="1" type="primary">ftsQ</name>
</gene>
<protein>
    <recommendedName>
        <fullName evidence="1">Cell division protein FtsQ</fullName>
    </recommendedName>
</protein>
<accession>O86038</accession>
<evidence type="ECO:0000255" key="1">
    <source>
        <dbReference type="HAMAP-Rule" id="MF_00911"/>
    </source>
</evidence>
<evidence type="ECO:0000255" key="2">
    <source>
        <dbReference type="PROSITE-ProRule" id="PRU01115"/>
    </source>
</evidence>
<evidence type="ECO:0000256" key="3">
    <source>
        <dbReference type="SAM" id="MobiDB-lite"/>
    </source>
</evidence>
<name>FTSQ_STRCU</name>